<protein>
    <recommendedName>
        <fullName evidence="1">Holo-[acyl-carrier-protein] synthase</fullName>
        <shortName evidence="1">Holo-ACP synthase</shortName>
        <ecNumber evidence="1">2.7.8.7</ecNumber>
    </recommendedName>
    <alternativeName>
        <fullName evidence="1">4'-phosphopantetheinyl transferase AcpS</fullName>
    </alternativeName>
</protein>
<reference key="1">
    <citation type="submission" date="2008-08" db="EMBL/GenBank/DDBJ databases">
        <title>The complete genome sequence of Thermodesulfovibrio yellowstonii strain ATCC 51303 / DSM 11347 / YP87.</title>
        <authorList>
            <person name="Dodson R.J."/>
            <person name="Durkin A.S."/>
            <person name="Wu M."/>
            <person name="Eisen J."/>
            <person name="Sutton G."/>
        </authorList>
    </citation>
    <scope>NUCLEOTIDE SEQUENCE [LARGE SCALE GENOMIC DNA]</scope>
    <source>
        <strain>ATCC 51303 / DSM 11347 / YP87</strain>
    </source>
</reference>
<name>ACPS_THEYD</name>
<sequence length="113" mass="12624">MIEGVGVDIVAVERIKKIYEKCGEKFLNKVFTEGEISYSFSHANPFPHLAARFAVKEAVIKALKKQKGLTLKNIEVRNNSDGSPEVKIPGFNKKIFISISHEKNYAVAFVVIT</sequence>
<proteinExistence type="inferred from homology"/>
<dbReference type="EC" id="2.7.8.7" evidence="1"/>
<dbReference type="EMBL" id="CP001147">
    <property type="protein sequence ID" value="ACI20585.1"/>
    <property type="molecule type" value="Genomic_DNA"/>
</dbReference>
<dbReference type="RefSeq" id="WP_012545321.1">
    <property type="nucleotide sequence ID" value="NC_011296.1"/>
</dbReference>
<dbReference type="RefSeq" id="YP_002248383.1">
    <property type="nucleotide sequence ID" value="NC_011296.1"/>
</dbReference>
<dbReference type="SMR" id="B5YJG8"/>
<dbReference type="FunCoup" id="B5YJG8">
    <property type="interactions" value="130"/>
</dbReference>
<dbReference type="STRING" id="289376.THEYE_A0540"/>
<dbReference type="EnsemblBacteria" id="ACI20585">
    <property type="protein sequence ID" value="ACI20585"/>
    <property type="gene ID" value="THEYE_A0540"/>
</dbReference>
<dbReference type="KEGG" id="tye:THEYE_A0540"/>
<dbReference type="PATRIC" id="fig|289376.4.peg.534"/>
<dbReference type="eggNOG" id="COG0736">
    <property type="taxonomic scope" value="Bacteria"/>
</dbReference>
<dbReference type="HOGENOM" id="CLU_089696_0_2_0"/>
<dbReference type="InParanoid" id="B5YJG8"/>
<dbReference type="OrthoDB" id="517356at2"/>
<dbReference type="Proteomes" id="UP000000718">
    <property type="component" value="Chromosome"/>
</dbReference>
<dbReference type="GO" id="GO:0005737">
    <property type="term" value="C:cytoplasm"/>
    <property type="evidence" value="ECO:0007669"/>
    <property type="project" value="UniProtKB-SubCell"/>
</dbReference>
<dbReference type="GO" id="GO:0008897">
    <property type="term" value="F:holo-[acyl-carrier-protein] synthase activity"/>
    <property type="evidence" value="ECO:0007669"/>
    <property type="project" value="UniProtKB-UniRule"/>
</dbReference>
<dbReference type="GO" id="GO:0000287">
    <property type="term" value="F:magnesium ion binding"/>
    <property type="evidence" value="ECO:0007669"/>
    <property type="project" value="UniProtKB-UniRule"/>
</dbReference>
<dbReference type="GO" id="GO:0006633">
    <property type="term" value="P:fatty acid biosynthetic process"/>
    <property type="evidence" value="ECO:0007669"/>
    <property type="project" value="UniProtKB-UniRule"/>
</dbReference>
<dbReference type="Gene3D" id="3.90.470.20">
    <property type="entry name" value="4'-phosphopantetheinyl transferase domain"/>
    <property type="match status" value="1"/>
</dbReference>
<dbReference type="HAMAP" id="MF_00101">
    <property type="entry name" value="AcpS"/>
    <property type="match status" value="1"/>
</dbReference>
<dbReference type="InterPro" id="IPR008278">
    <property type="entry name" value="4-PPantetheinyl_Trfase_dom"/>
</dbReference>
<dbReference type="InterPro" id="IPR037143">
    <property type="entry name" value="4-PPantetheinyl_Trfase_dom_sf"/>
</dbReference>
<dbReference type="InterPro" id="IPR002582">
    <property type="entry name" value="ACPS"/>
</dbReference>
<dbReference type="InterPro" id="IPR004568">
    <property type="entry name" value="Ppantetheine-prot_Trfase_dom"/>
</dbReference>
<dbReference type="NCBIfam" id="TIGR00516">
    <property type="entry name" value="acpS"/>
    <property type="match status" value="1"/>
</dbReference>
<dbReference type="NCBIfam" id="TIGR00556">
    <property type="entry name" value="pantethn_trn"/>
    <property type="match status" value="1"/>
</dbReference>
<dbReference type="Pfam" id="PF01648">
    <property type="entry name" value="ACPS"/>
    <property type="match status" value="1"/>
</dbReference>
<dbReference type="SUPFAM" id="SSF56214">
    <property type="entry name" value="4'-phosphopantetheinyl transferase"/>
    <property type="match status" value="1"/>
</dbReference>
<accession>B5YJG8</accession>
<organism>
    <name type="scientific">Thermodesulfovibrio yellowstonii (strain ATCC 51303 / DSM 11347 / YP87)</name>
    <dbReference type="NCBI Taxonomy" id="289376"/>
    <lineage>
        <taxon>Bacteria</taxon>
        <taxon>Pseudomonadati</taxon>
        <taxon>Nitrospirota</taxon>
        <taxon>Thermodesulfovibrionia</taxon>
        <taxon>Thermodesulfovibrionales</taxon>
        <taxon>Thermodesulfovibrionaceae</taxon>
        <taxon>Thermodesulfovibrio</taxon>
    </lineage>
</organism>
<evidence type="ECO:0000255" key="1">
    <source>
        <dbReference type="HAMAP-Rule" id="MF_00101"/>
    </source>
</evidence>
<feature type="chain" id="PRO_1000093926" description="Holo-[acyl-carrier-protein] synthase">
    <location>
        <begin position="1"/>
        <end position="113"/>
    </location>
</feature>
<feature type="binding site" evidence="1">
    <location>
        <position position="8"/>
    </location>
    <ligand>
        <name>Mg(2+)</name>
        <dbReference type="ChEBI" id="CHEBI:18420"/>
    </ligand>
</feature>
<feature type="binding site" evidence="1">
    <location>
        <position position="57"/>
    </location>
    <ligand>
        <name>Mg(2+)</name>
        <dbReference type="ChEBI" id="CHEBI:18420"/>
    </ligand>
</feature>
<gene>
    <name evidence="1" type="primary">acpS</name>
    <name type="ordered locus">THEYE_A0540</name>
</gene>
<comment type="function">
    <text evidence="1">Transfers the 4'-phosphopantetheine moiety from coenzyme A to a Ser of acyl-carrier-protein.</text>
</comment>
<comment type="catalytic activity">
    <reaction evidence="1">
        <text>apo-[ACP] + CoA = holo-[ACP] + adenosine 3',5'-bisphosphate + H(+)</text>
        <dbReference type="Rhea" id="RHEA:12068"/>
        <dbReference type="Rhea" id="RHEA-COMP:9685"/>
        <dbReference type="Rhea" id="RHEA-COMP:9690"/>
        <dbReference type="ChEBI" id="CHEBI:15378"/>
        <dbReference type="ChEBI" id="CHEBI:29999"/>
        <dbReference type="ChEBI" id="CHEBI:57287"/>
        <dbReference type="ChEBI" id="CHEBI:58343"/>
        <dbReference type="ChEBI" id="CHEBI:64479"/>
        <dbReference type="EC" id="2.7.8.7"/>
    </reaction>
</comment>
<comment type="cofactor">
    <cofactor evidence="1">
        <name>Mg(2+)</name>
        <dbReference type="ChEBI" id="CHEBI:18420"/>
    </cofactor>
</comment>
<comment type="subcellular location">
    <subcellularLocation>
        <location evidence="1">Cytoplasm</location>
    </subcellularLocation>
</comment>
<comment type="similarity">
    <text evidence="1">Belongs to the P-Pant transferase superfamily. AcpS family.</text>
</comment>
<keyword id="KW-0963">Cytoplasm</keyword>
<keyword id="KW-0275">Fatty acid biosynthesis</keyword>
<keyword id="KW-0276">Fatty acid metabolism</keyword>
<keyword id="KW-0444">Lipid biosynthesis</keyword>
<keyword id="KW-0443">Lipid metabolism</keyword>
<keyword id="KW-0460">Magnesium</keyword>
<keyword id="KW-0479">Metal-binding</keyword>
<keyword id="KW-1185">Reference proteome</keyword>
<keyword id="KW-0808">Transferase</keyword>